<name>OBG_AKKM8</name>
<dbReference type="EC" id="3.6.5.-" evidence="1"/>
<dbReference type="EMBL" id="CP001071">
    <property type="protein sequence ID" value="ACD04565.1"/>
    <property type="status" value="ALT_INIT"/>
    <property type="molecule type" value="Genomic_DNA"/>
</dbReference>
<dbReference type="SMR" id="B2UQ30"/>
<dbReference type="STRING" id="349741.Amuc_0728"/>
<dbReference type="PaxDb" id="349741-Amuc_0728"/>
<dbReference type="KEGG" id="amu:Amuc_0728"/>
<dbReference type="eggNOG" id="COG0536">
    <property type="taxonomic scope" value="Bacteria"/>
</dbReference>
<dbReference type="HOGENOM" id="CLU_011747_2_0_0"/>
<dbReference type="OrthoDB" id="9807318at2"/>
<dbReference type="BioCyc" id="AMUC349741:G1GBX-791-MONOMER"/>
<dbReference type="Proteomes" id="UP000001031">
    <property type="component" value="Chromosome"/>
</dbReference>
<dbReference type="GO" id="GO:0005737">
    <property type="term" value="C:cytoplasm"/>
    <property type="evidence" value="ECO:0007669"/>
    <property type="project" value="UniProtKB-SubCell"/>
</dbReference>
<dbReference type="GO" id="GO:0005525">
    <property type="term" value="F:GTP binding"/>
    <property type="evidence" value="ECO:0007669"/>
    <property type="project" value="UniProtKB-UniRule"/>
</dbReference>
<dbReference type="GO" id="GO:0003924">
    <property type="term" value="F:GTPase activity"/>
    <property type="evidence" value="ECO:0007669"/>
    <property type="project" value="UniProtKB-UniRule"/>
</dbReference>
<dbReference type="GO" id="GO:0000287">
    <property type="term" value="F:magnesium ion binding"/>
    <property type="evidence" value="ECO:0007669"/>
    <property type="project" value="InterPro"/>
</dbReference>
<dbReference type="GO" id="GO:0042254">
    <property type="term" value="P:ribosome biogenesis"/>
    <property type="evidence" value="ECO:0007669"/>
    <property type="project" value="UniProtKB-UniRule"/>
</dbReference>
<dbReference type="CDD" id="cd01898">
    <property type="entry name" value="Obg"/>
    <property type="match status" value="1"/>
</dbReference>
<dbReference type="FunFam" id="2.70.210.12:FF:000001">
    <property type="entry name" value="GTPase Obg"/>
    <property type="match status" value="1"/>
</dbReference>
<dbReference type="Gene3D" id="2.70.210.12">
    <property type="entry name" value="GTP1/OBG domain"/>
    <property type="match status" value="1"/>
</dbReference>
<dbReference type="Gene3D" id="3.40.50.300">
    <property type="entry name" value="P-loop containing nucleotide triphosphate hydrolases"/>
    <property type="match status" value="1"/>
</dbReference>
<dbReference type="HAMAP" id="MF_01454">
    <property type="entry name" value="GTPase_Obg"/>
    <property type="match status" value="1"/>
</dbReference>
<dbReference type="InterPro" id="IPR031167">
    <property type="entry name" value="G_OBG"/>
</dbReference>
<dbReference type="InterPro" id="IPR006073">
    <property type="entry name" value="GTP-bd"/>
</dbReference>
<dbReference type="InterPro" id="IPR014100">
    <property type="entry name" value="GTP-bd_Obg/CgtA"/>
</dbReference>
<dbReference type="InterPro" id="IPR006169">
    <property type="entry name" value="GTP1_OBG_dom"/>
</dbReference>
<dbReference type="InterPro" id="IPR036726">
    <property type="entry name" value="GTP1_OBG_dom_sf"/>
</dbReference>
<dbReference type="InterPro" id="IPR045086">
    <property type="entry name" value="OBG_GTPase"/>
</dbReference>
<dbReference type="InterPro" id="IPR027417">
    <property type="entry name" value="P-loop_NTPase"/>
</dbReference>
<dbReference type="InterPro" id="IPR005225">
    <property type="entry name" value="Small_GTP-bd"/>
</dbReference>
<dbReference type="NCBIfam" id="TIGR02729">
    <property type="entry name" value="Obg_CgtA"/>
    <property type="match status" value="1"/>
</dbReference>
<dbReference type="NCBIfam" id="NF008955">
    <property type="entry name" value="PRK12297.1"/>
    <property type="match status" value="1"/>
</dbReference>
<dbReference type="NCBIfam" id="NF008956">
    <property type="entry name" value="PRK12299.1"/>
    <property type="match status" value="1"/>
</dbReference>
<dbReference type="NCBIfam" id="TIGR00231">
    <property type="entry name" value="small_GTP"/>
    <property type="match status" value="1"/>
</dbReference>
<dbReference type="PANTHER" id="PTHR11702">
    <property type="entry name" value="DEVELOPMENTALLY REGULATED GTP-BINDING PROTEIN-RELATED"/>
    <property type="match status" value="1"/>
</dbReference>
<dbReference type="PANTHER" id="PTHR11702:SF31">
    <property type="entry name" value="MITOCHONDRIAL RIBOSOME-ASSOCIATED GTPASE 2"/>
    <property type="match status" value="1"/>
</dbReference>
<dbReference type="Pfam" id="PF01018">
    <property type="entry name" value="GTP1_OBG"/>
    <property type="match status" value="1"/>
</dbReference>
<dbReference type="Pfam" id="PF01926">
    <property type="entry name" value="MMR_HSR1"/>
    <property type="match status" value="1"/>
</dbReference>
<dbReference type="PIRSF" id="PIRSF002401">
    <property type="entry name" value="GTP_bd_Obg/CgtA"/>
    <property type="match status" value="1"/>
</dbReference>
<dbReference type="PRINTS" id="PR00326">
    <property type="entry name" value="GTP1OBG"/>
</dbReference>
<dbReference type="SUPFAM" id="SSF82051">
    <property type="entry name" value="Obg GTP-binding protein N-terminal domain"/>
    <property type="match status" value="1"/>
</dbReference>
<dbReference type="SUPFAM" id="SSF52540">
    <property type="entry name" value="P-loop containing nucleoside triphosphate hydrolases"/>
    <property type="match status" value="1"/>
</dbReference>
<dbReference type="PROSITE" id="PS51710">
    <property type="entry name" value="G_OBG"/>
    <property type="match status" value="1"/>
</dbReference>
<dbReference type="PROSITE" id="PS51883">
    <property type="entry name" value="OBG"/>
    <property type="match status" value="1"/>
</dbReference>
<organism>
    <name type="scientific">Akkermansia muciniphila (strain ATCC BAA-835 / DSM 22959 / JCM 33894 / BCRC 81048 / CCUG 64013 / CIP 107961 / Muc)</name>
    <dbReference type="NCBI Taxonomy" id="349741"/>
    <lineage>
        <taxon>Bacteria</taxon>
        <taxon>Pseudomonadati</taxon>
        <taxon>Verrucomicrobiota</taxon>
        <taxon>Verrucomicrobiia</taxon>
        <taxon>Verrucomicrobiales</taxon>
        <taxon>Akkermansiaceae</taxon>
        <taxon>Akkermansia</taxon>
    </lineage>
</organism>
<keyword id="KW-0963">Cytoplasm</keyword>
<keyword id="KW-0342">GTP-binding</keyword>
<keyword id="KW-0378">Hydrolase</keyword>
<keyword id="KW-0460">Magnesium</keyword>
<keyword id="KW-0479">Metal-binding</keyword>
<keyword id="KW-0547">Nucleotide-binding</keyword>
<keyword id="KW-1185">Reference proteome</keyword>
<protein>
    <recommendedName>
        <fullName evidence="1">GTPase Obg</fullName>
        <ecNumber evidence="1">3.6.5.-</ecNumber>
    </recommendedName>
    <alternativeName>
        <fullName evidence="1">GTP-binding protein Obg</fullName>
    </alternativeName>
</protein>
<accession>B2UQ30</accession>
<reference key="1">
    <citation type="journal article" date="2011" name="PLoS ONE">
        <title>The genome of Akkermansia muciniphila, a dedicated intestinal mucin degrader, and its use in exploring intestinal metagenomes.</title>
        <authorList>
            <person name="van Passel M.W."/>
            <person name="Kant R."/>
            <person name="Zoetendal E.G."/>
            <person name="Plugge C.M."/>
            <person name="Derrien M."/>
            <person name="Malfatti S.A."/>
            <person name="Chain P.S."/>
            <person name="Woyke T."/>
            <person name="Palva A."/>
            <person name="de Vos W.M."/>
            <person name="Smidt H."/>
        </authorList>
    </citation>
    <scope>NUCLEOTIDE SEQUENCE [LARGE SCALE GENOMIC DNA]</scope>
    <source>
        <strain>ATCC BAA-835 / DSM 22959 / JCM 33894 / BCRC 81048 / CCUG 64013 / CIP 107961 / Muc</strain>
    </source>
</reference>
<gene>
    <name evidence="1" type="primary">obg</name>
    <name type="ordered locus">Amuc_0728</name>
</gene>
<evidence type="ECO:0000255" key="1">
    <source>
        <dbReference type="HAMAP-Rule" id="MF_01454"/>
    </source>
</evidence>
<evidence type="ECO:0000255" key="2">
    <source>
        <dbReference type="PROSITE-ProRule" id="PRU01231"/>
    </source>
</evidence>
<evidence type="ECO:0000305" key="3"/>
<comment type="function">
    <text evidence="1">An essential GTPase which binds GTP, GDP and possibly (p)ppGpp with moderate affinity, with high nucleotide exchange rates and a fairly low GTP hydrolysis rate. Plays a role in control of the cell cycle, stress response, ribosome biogenesis and in those bacteria that undergo differentiation, in morphogenesis control.</text>
</comment>
<comment type="cofactor">
    <cofactor evidence="1">
        <name>Mg(2+)</name>
        <dbReference type="ChEBI" id="CHEBI:18420"/>
    </cofactor>
</comment>
<comment type="subunit">
    <text evidence="1">Monomer.</text>
</comment>
<comment type="subcellular location">
    <subcellularLocation>
        <location evidence="1">Cytoplasm</location>
    </subcellularLocation>
</comment>
<comment type="similarity">
    <text evidence="1">Belongs to the TRAFAC class OBG-HflX-like GTPase superfamily. OBG GTPase family.</text>
</comment>
<comment type="sequence caution" evidence="3">
    <conflict type="erroneous initiation">
        <sequence resource="EMBL-CDS" id="ACD04565"/>
    </conflict>
    <text>Extended N-terminus.</text>
</comment>
<proteinExistence type="inferred from homology"/>
<feature type="chain" id="PRO_0000385681" description="GTPase Obg">
    <location>
        <begin position="1"/>
        <end position="350"/>
    </location>
</feature>
<feature type="domain" description="Obg" evidence="2">
    <location>
        <begin position="1"/>
        <end position="175"/>
    </location>
</feature>
<feature type="domain" description="OBG-type G" evidence="1">
    <location>
        <begin position="176"/>
        <end position="345"/>
    </location>
</feature>
<feature type="binding site" evidence="1">
    <location>
        <begin position="182"/>
        <end position="189"/>
    </location>
    <ligand>
        <name>GTP</name>
        <dbReference type="ChEBI" id="CHEBI:37565"/>
    </ligand>
</feature>
<feature type="binding site" evidence="1">
    <location>
        <position position="189"/>
    </location>
    <ligand>
        <name>Mg(2+)</name>
        <dbReference type="ChEBI" id="CHEBI:18420"/>
    </ligand>
</feature>
<feature type="binding site" evidence="1">
    <location>
        <begin position="207"/>
        <end position="211"/>
    </location>
    <ligand>
        <name>GTP</name>
        <dbReference type="ChEBI" id="CHEBI:37565"/>
    </ligand>
</feature>
<feature type="binding site" evidence="1">
    <location>
        <position position="209"/>
    </location>
    <ligand>
        <name>Mg(2+)</name>
        <dbReference type="ChEBI" id="CHEBI:18420"/>
    </ligand>
</feature>
<feature type="binding site" evidence="1">
    <location>
        <begin position="229"/>
        <end position="232"/>
    </location>
    <ligand>
        <name>GTP</name>
        <dbReference type="ChEBI" id="CHEBI:37565"/>
    </ligand>
</feature>
<feature type="binding site" evidence="1">
    <location>
        <begin position="299"/>
        <end position="302"/>
    </location>
    <ligand>
        <name>GTP</name>
        <dbReference type="ChEBI" id="CHEBI:37565"/>
    </ligand>
</feature>
<feature type="binding site" evidence="1">
    <location>
        <begin position="326"/>
        <end position="328"/>
    </location>
    <ligand>
        <name>GTP</name>
        <dbReference type="ChEBI" id="CHEBI:37565"/>
    </ligand>
</feature>
<sequence>MFVDNIRIFARAGKGGNGLVSFRRAKFVPKGGPDGGDGGDGGSVILEVDPHTNDLRSFFYDPKLIATDGVGGQSAKKHGKNGKSVIGKVPPGTIIYRSNASSMAEATWLEREGEGIELEKIADLTEIGTRFTLCQGGLGGKGNWHFRSATNQAPTEAEMGTEGEEGVFFMELRRIADAGLVGYPNAGKSTLLGDISEAKPKVASYPFTTLQPIIGVVEFDSFRRCVVADIPGIIEGAHNNRGLGHEFLRHITRCKVLVFVLDMAGSEGRDPIEDLQNLRTEIKLYSEDLAKQPWFVVANKMDLEGAEENLANFRMRFPKVDIIPISALNGDGISRLRNRLDELVGYKFIR</sequence>